<reference key="1">
    <citation type="submission" date="2009-03" db="EMBL/GenBank/DDBJ databases">
        <title>Comparison of the complete genome sequences of Rhodococcus erythropolis PR4 and Rhodococcus opacus B4.</title>
        <authorList>
            <person name="Takarada H."/>
            <person name="Sekine M."/>
            <person name="Hosoyama A."/>
            <person name="Yamada R."/>
            <person name="Fujisawa T."/>
            <person name="Omata S."/>
            <person name="Shimizu A."/>
            <person name="Tsukatani N."/>
            <person name="Tanikawa S."/>
            <person name="Fujita N."/>
            <person name="Harayama S."/>
        </authorList>
    </citation>
    <scope>NUCLEOTIDE SEQUENCE [LARGE SCALE GENOMIC DNA]</scope>
    <source>
        <strain>B4</strain>
    </source>
</reference>
<sequence length="369" mass="39793">MAVSLPLVFTAPRRGMPPKHLADLDSTERREAVKELGLPGFRADQLARQYYARLEADPEKMTDLPAAVREQVGAALFPTLLTAVKHLACDGGDTRKTLWKANDGTLLESVLMRYPDRATLCISSQAGCGMACPFCATGQGGLQRNLSTAEIVDQVRAAAAALRDGDVHGGPGRLSNVVFMGMGEPLANYKRVVAAVRRITSPAPDGLGLSQRSVTVSTVGLAPAIRKLADEDLSVTLAVSLHTPDDELRDTLVPVNNRWSVAEVLDAARYYADKSGRRVSIEYALIRDVNDQPWRADMLGKKLRKALGPLVHVNLIPLNPTPGSEWDASPKPVEKEFVRRVLAQGVSCTVRDTRGQEIAAACGQLAAEN</sequence>
<proteinExistence type="inferred from homology"/>
<protein>
    <recommendedName>
        <fullName evidence="1">Probable dual-specificity RNA methyltransferase RlmN</fullName>
        <ecNumber evidence="1">2.1.1.192</ecNumber>
    </recommendedName>
    <alternativeName>
        <fullName evidence="1">23S rRNA (adenine(2503)-C(2))-methyltransferase</fullName>
    </alternativeName>
    <alternativeName>
        <fullName evidence="1">23S rRNA m2A2503 methyltransferase</fullName>
    </alternativeName>
    <alternativeName>
        <fullName evidence="1">Ribosomal RNA large subunit methyltransferase N</fullName>
    </alternativeName>
    <alternativeName>
        <fullName evidence="1">tRNA (adenine(37)-C(2))-methyltransferase</fullName>
    </alternativeName>
    <alternativeName>
        <fullName evidence="1">tRNA m2A37 methyltransferase</fullName>
    </alternativeName>
</protein>
<accession>C1B2V0</accession>
<gene>
    <name evidence="1" type="primary">rlmN</name>
    <name type="ordered locus">ROP_66200</name>
</gene>
<feature type="chain" id="PRO_1000188594" description="Probable dual-specificity RNA methyltransferase RlmN">
    <location>
        <begin position="1"/>
        <end position="369"/>
    </location>
</feature>
<feature type="domain" description="Radical SAM core" evidence="2">
    <location>
        <begin position="114"/>
        <end position="351"/>
    </location>
</feature>
<feature type="active site" description="Proton acceptor" evidence="1">
    <location>
        <position position="108"/>
    </location>
</feature>
<feature type="active site" description="S-methylcysteine intermediate" evidence="1">
    <location>
        <position position="362"/>
    </location>
</feature>
<feature type="binding site" evidence="1">
    <location>
        <position position="128"/>
    </location>
    <ligand>
        <name>[4Fe-4S] cluster</name>
        <dbReference type="ChEBI" id="CHEBI:49883"/>
        <note>4Fe-4S-S-AdoMet</note>
    </ligand>
</feature>
<feature type="binding site" evidence="1">
    <location>
        <position position="132"/>
    </location>
    <ligand>
        <name>[4Fe-4S] cluster</name>
        <dbReference type="ChEBI" id="CHEBI:49883"/>
        <note>4Fe-4S-S-AdoMet</note>
    </ligand>
</feature>
<feature type="binding site" evidence="1">
    <location>
        <position position="135"/>
    </location>
    <ligand>
        <name>[4Fe-4S] cluster</name>
        <dbReference type="ChEBI" id="CHEBI:49883"/>
        <note>4Fe-4S-S-AdoMet</note>
    </ligand>
</feature>
<feature type="binding site" evidence="1">
    <location>
        <begin position="183"/>
        <end position="184"/>
    </location>
    <ligand>
        <name>S-adenosyl-L-methionine</name>
        <dbReference type="ChEBI" id="CHEBI:59789"/>
    </ligand>
</feature>
<feature type="binding site" evidence="1">
    <location>
        <position position="217"/>
    </location>
    <ligand>
        <name>S-adenosyl-L-methionine</name>
        <dbReference type="ChEBI" id="CHEBI:59789"/>
    </ligand>
</feature>
<feature type="binding site" evidence="1">
    <location>
        <begin position="240"/>
        <end position="242"/>
    </location>
    <ligand>
        <name>S-adenosyl-L-methionine</name>
        <dbReference type="ChEBI" id="CHEBI:59789"/>
    </ligand>
</feature>
<feature type="binding site" evidence="1">
    <location>
        <position position="319"/>
    </location>
    <ligand>
        <name>S-adenosyl-L-methionine</name>
        <dbReference type="ChEBI" id="CHEBI:59789"/>
    </ligand>
</feature>
<feature type="disulfide bond" description="(transient)" evidence="1">
    <location>
        <begin position="121"/>
        <end position="362"/>
    </location>
</feature>
<organism>
    <name type="scientific">Rhodococcus opacus (strain B4)</name>
    <dbReference type="NCBI Taxonomy" id="632772"/>
    <lineage>
        <taxon>Bacteria</taxon>
        <taxon>Bacillati</taxon>
        <taxon>Actinomycetota</taxon>
        <taxon>Actinomycetes</taxon>
        <taxon>Mycobacteriales</taxon>
        <taxon>Nocardiaceae</taxon>
        <taxon>Rhodococcus</taxon>
    </lineage>
</organism>
<comment type="function">
    <text evidence="1">Specifically methylates position 2 of adenine 2503 in 23S rRNA and position 2 of adenine 37 in tRNAs.</text>
</comment>
<comment type="catalytic activity">
    <reaction evidence="1">
        <text>adenosine(2503) in 23S rRNA + 2 reduced [2Fe-2S]-[ferredoxin] + 2 S-adenosyl-L-methionine = 2-methyladenosine(2503) in 23S rRNA + 5'-deoxyadenosine + L-methionine + 2 oxidized [2Fe-2S]-[ferredoxin] + S-adenosyl-L-homocysteine</text>
        <dbReference type="Rhea" id="RHEA:42916"/>
        <dbReference type="Rhea" id="RHEA-COMP:10000"/>
        <dbReference type="Rhea" id="RHEA-COMP:10001"/>
        <dbReference type="Rhea" id="RHEA-COMP:10152"/>
        <dbReference type="Rhea" id="RHEA-COMP:10282"/>
        <dbReference type="ChEBI" id="CHEBI:17319"/>
        <dbReference type="ChEBI" id="CHEBI:33737"/>
        <dbReference type="ChEBI" id="CHEBI:33738"/>
        <dbReference type="ChEBI" id="CHEBI:57844"/>
        <dbReference type="ChEBI" id="CHEBI:57856"/>
        <dbReference type="ChEBI" id="CHEBI:59789"/>
        <dbReference type="ChEBI" id="CHEBI:74411"/>
        <dbReference type="ChEBI" id="CHEBI:74497"/>
        <dbReference type="EC" id="2.1.1.192"/>
    </reaction>
</comment>
<comment type="catalytic activity">
    <reaction evidence="1">
        <text>adenosine(37) in tRNA + 2 reduced [2Fe-2S]-[ferredoxin] + 2 S-adenosyl-L-methionine = 2-methyladenosine(37) in tRNA + 5'-deoxyadenosine + L-methionine + 2 oxidized [2Fe-2S]-[ferredoxin] + S-adenosyl-L-homocysteine</text>
        <dbReference type="Rhea" id="RHEA:43332"/>
        <dbReference type="Rhea" id="RHEA-COMP:10000"/>
        <dbReference type="Rhea" id="RHEA-COMP:10001"/>
        <dbReference type="Rhea" id="RHEA-COMP:10162"/>
        <dbReference type="Rhea" id="RHEA-COMP:10485"/>
        <dbReference type="ChEBI" id="CHEBI:17319"/>
        <dbReference type="ChEBI" id="CHEBI:33737"/>
        <dbReference type="ChEBI" id="CHEBI:33738"/>
        <dbReference type="ChEBI" id="CHEBI:57844"/>
        <dbReference type="ChEBI" id="CHEBI:57856"/>
        <dbReference type="ChEBI" id="CHEBI:59789"/>
        <dbReference type="ChEBI" id="CHEBI:74411"/>
        <dbReference type="ChEBI" id="CHEBI:74497"/>
        <dbReference type="EC" id="2.1.1.192"/>
    </reaction>
</comment>
<comment type="cofactor">
    <cofactor evidence="1">
        <name>[4Fe-4S] cluster</name>
        <dbReference type="ChEBI" id="CHEBI:49883"/>
    </cofactor>
    <text evidence="1">Binds 1 [4Fe-4S] cluster. The cluster is coordinated with 3 cysteines and an exchangeable S-adenosyl-L-methionine.</text>
</comment>
<comment type="subcellular location">
    <subcellularLocation>
        <location evidence="1">Cytoplasm</location>
    </subcellularLocation>
</comment>
<comment type="miscellaneous">
    <text evidence="1">Reaction proceeds by a ping-pong mechanism involving intermediate methylation of a conserved cysteine residue.</text>
</comment>
<comment type="similarity">
    <text evidence="1">Belongs to the radical SAM superfamily. RlmN family.</text>
</comment>
<name>RLMN_RHOOB</name>
<dbReference type="EC" id="2.1.1.192" evidence="1"/>
<dbReference type="EMBL" id="AP011115">
    <property type="protein sequence ID" value="BAH54867.1"/>
    <property type="molecule type" value="Genomic_DNA"/>
</dbReference>
<dbReference type="RefSeq" id="WP_015890306.1">
    <property type="nucleotide sequence ID" value="NC_012522.1"/>
</dbReference>
<dbReference type="SMR" id="C1B2V0"/>
<dbReference type="STRING" id="632772.ROP_66200"/>
<dbReference type="KEGG" id="rop:ROP_66200"/>
<dbReference type="PATRIC" id="fig|632772.20.peg.6906"/>
<dbReference type="HOGENOM" id="CLU_029101_0_2_11"/>
<dbReference type="OrthoDB" id="9793973at2"/>
<dbReference type="Proteomes" id="UP000002212">
    <property type="component" value="Chromosome"/>
</dbReference>
<dbReference type="GO" id="GO:0005737">
    <property type="term" value="C:cytoplasm"/>
    <property type="evidence" value="ECO:0007669"/>
    <property type="project" value="UniProtKB-SubCell"/>
</dbReference>
<dbReference type="GO" id="GO:0051539">
    <property type="term" value="F:4 iron, 4 sulfur cluster binding"/>
    <property type="evidence" value="ECO:0007669"/>
    <property type="project" value="UniProtKB-UniRule"/>
</dbReference>
<dbReference type="GO" id="GO:0046872">
    <property type="term" value="F:metal ion binding"/>
    <property type="evidence" value="ECO:0007669"/>
    <property type="project" value="UniProtKB-KW"/>
</dbReference>
<dbReference type="GO" id="GO:0070040">
    <property type="term" value="F:rRNA (adenine(2503)-C2-)-methyltransferase activity"/>
    <property type="evidence" value="ECO:0007669"/>
    <property type="project" value="UniProtKB-UniRule"/>
</dbReference>
<dbReference type="GO" id="GO:0019843">
    <property type="term" value="F:rRNA binding"/>
    <property type="evidence" value="ECO:0007669"/>
    <property type="project" value="UniProtKB-UniRule"/>
</dbReference>
<dbReference type="GO" id="GO:0002935">
    <property type="term" value="F:tRNA (adenine(37)-C2)-methyltransferase activity"/>
    <property type="evidence" value="ECO:0007669"/>
    <property type="project" value="UniProtKB-UniRule"/>
</dbReference>
<dbReference type="GO" id="GO:0000049">
    <property type="term" value="F:tRNA binding"/>
    <property type="evidence" value="ECO:0007669"/>
    <property type="project" value="UniProtKB-UniRule"/>
</dbReference>
<dbReference type="GO" id="GO:0070475">
    <property type="term" value="P:rRNA base methylation"/>
    <property type="evidence" value="ECO:0007669"/>
    <property type="project" value="UniProtKB-UniRule"/>
</dbReference>
<dbReference type="GO" id="GO:0030488">
    <property type="term" value="P:tRNA methylation"/>
    <property type="evidence" value="ECO:0007669"/>
    <property type="project" value="UniProtKB-UniRule"/>
</dbReference>
<dbReference type="CDD" id="cd01335">
    <property type="entry name" value="Radical_SAM"/>
    <property type="match status" value="1"/>
</dbReference>
<dbReference type="FunFam" id="3.20.20.70:FF:000014">
    <property type="entry name" value="Probable dual-specificity RNA methyltransferase RlmN"/>
    <property type="match status" value="1"/>
</dbReference>
<dbReference type="Gene3D" id="1.10.150.530">
    <property type="match status" value="1"/>
</dbReference>
<dbReference type="Gene3D" id="3.20.20.70">
    <property type="entry name" value="Aldolase class I"/>
    <property type="match status" value="1"/>
</dbReference>
<dbReference type="HAMAP" id="MF_01849">
    <property type="entry name" value="RNA_methyltr_RlmN"/>
    <property type="match status" value="1"/>
</dbReference>
<dbReference type="InterPro" id="IPR013785">
    <property type="entry name" value="Aldolase_TIM"/>
</dbReference>
<dbReference type="InterPro" id="IPR040072">
    <property type="entry name" value="Methyltransferase_A"/>
</dbReference>
<dbReference type="InterPro" id="IPR027492">
    <property type="entry name" value="RNA_MTrfase_RlmN"/>
</dbReference>
<dbReference type="InterPro" id="IPR004383">
    <property type="entry name" value="rRNA_lsu_MTrfase_RlmN/Cfr"/>
</dbReference>
<dbReference type="InterPro" id="IPR007197">
    <property type="entry name" value="rSAM"/>
</dbReference>
<dbReference type="NCBIfam" id="TIGR00048">
    <property type="entry name" value="rRNA_mod_RlmN"/>
    <property type="match status" value="1"/>
</dbReference>
<dbReference type="PANTHER" id="PTHR30544">
    <property type="entry name" value="23S RRNA METHYLTRANSFERASE"/>
    <property type="match status" value="1"/>
</dbReference>
<dbReference type="PANTHER" id="PTHR30544:SF5">
    <property type="entry name" value="RADICAL SAM CORE DOMAIN-CONTAINING PROTEIN"/>
    <property type="match status" value="1"/>
</dbReference>
<dbReference type="Pfam" id="PF04055">
    <property type="entry name" value="Radical_SAM"/>
    <property type="match status" value="1"/>
</dbReference>
<dbReference type="PIRSF" id="PIRSF006004">
    <property type="entry name" value="CHP00048"/>
    <property type="match status" value="1"/>
</dbReference>
<dbReference type="SFLD" id="SFLDF00275">
    <property type="entry name" value="adenosine_C2_methyltransferase"/>
    <property type="match status" value="1"/>
</dbReference>
<dbReference type="SFLD" id="SFLDG01062">
    <property type="entry name" value="methyltransferase_(Class_A)"/>
    <property type="match status" value="1"/>
</dbReference>
<dbReference type="SUPFAM" id="SSF102114">
    <property type="entry name" value="Radical SAM enzymes"/>
    <property type="match status" value="1"/>
</dbReference>
<dbReference type="PROSITE" id="PS51918">
    <property type="entry name" value="RADICAL_SAM"/>
    <property type="match status" value="1"/>
</dbReference>
<keyword id="KW-0004">4Fe-4S</keyword>
<keyword id="KW-0963">Cytoplasm</keyword>
<keyword id="KW-1015">Disulfide bond</keyword>
<keyword id="KW-0408">Iron</keyword>
<keyword id="KW-0411">Iron-sulfur</keyword>
<keyword id="KW-0479">Metal-binding</keyword>
<keyword id="KW-0489">Methyltransferase</keyword>
<keyword id="KW-0698">rRNA processing</keyword>
<keyword id="KW-0949">S-adenosyl-L-methionine</keyword>
<keyword id="KW-0808">Transferase</keyword>
<keyword id="KW-0819">tRNA processing</keyword>
<evidence type="ECO:0000255" key="1">
    <source>
        <dbReference type="HAMAP-Rule" id="MF_01849"/>
    </source>
</evidence>
<evidence type="ECO:0000255" key="2">
    <source>
        <dbReference type="PROSITE-ProRule" id="PRU01266"/>
    </source>
</evidence>